<evidence type="ECO:0000255" key="1">
    <source>
        <dbReference type="HAMAP-Rule" id="MF_00115"/>
    </source>
</evidence>
<evidence type="ECO:0000305" key="2"/>
<sequence>MSETKHTLHTPGWVSDFQKFIMRGNVLDLAVGVVIGAAFSAIVGSAVKDILTPFIGLITGGVDFSNLFITLKGPVKDTLAEAQKAGAVTVNIGVFLNAVIQFLIIAFFIFWLTRILSKLSRKQEAAPAAPPAPTKEEVLLTEIRDLLAQKNS</sequence>
<organism>
    <name type="scientific">Gluconobacter oxydans (strain 621H)</name>
    <name type="common">Gluconobacter suboxydans</name>
    <dbReference type="NCBI Taxonomy" id="290633"/>
    <lineage>
        <taxon>Bacteria</taxon>
        <taxon>Pseudomonadati</taxon>
        <taxon>Pseudomonadota</taxon>
        <taxon>Alphaproteobacteria</taxon>
        <taxon>Acetobacterales</taxon>
        <taxon>Acetobacteraceae</taxon>
        <taxon>Gluconobacter</taxon>
    </lineage>
</organism>
<keyword id="KW-0997">Cell inner membrane</keyword>
<keyword id="KW-1003">Cell membrane</keyword>
<keyword id="KW-0407">Ion channel</keyword>
<keyword id="KW-0406">Ion transport</keyword>
<keyword id="KW-0472">Membrane</keyword>
<keyword id="KW-1185">Reference proteome</keyword>
<keyword id="KW-0812">Transmembrane</keyword>
<keyword id="KW-1133">Transmembrane helix</keyword>
<keyword id="KW-0813">Transport</keyword>
<accession>Q5FNB7</accession>
<protein>
    <recommendedName>
        <fullName evidence="1">Large-conductance mechanosensitive channel</fullName>
    </recommendedName>
</protein>
<feature type="chain" id="PRO_0000238004" description="Large-conductance mechanosensitive channel">
    <location>
        <begin position="1"/>
        <end position="152"/>
    </location>
</feature>
<feature type="transmembrane region" description="Helical" evidence="1">
    <location>
        <begin position="26"/>
        <end position="46"/>
    </location>
</feature>
<feature type="transmembrane region" description="Helical" evidence="1">
    <location>
        <begin position="50"/>
        <end position="70"/>
    </location>
</feature>
<feature type="transmembrane region" description="Helical" evidence="1">
    <location>
        <begin position="92"/>
        <end position="112"/>
    </location>
</feature>
<proteinExistence type="inferred from homology"/>
<comment type="function">
    <text evidence="1">Channel that opens in response to stretch forces in the membrane lipid bilayer. May participate in the regulation of osmotic pressure changes within the cell.</text>
</comment>
<comment type="subunit">
    <text evidence="1">Homopentamer.</text>
</comment>
<comment type="subcellular location">
    <subcellularLocation>
        <location evidence="1">Cell inner membrane</location>
        <topology evidence="1">Multi-pass membrane protein</topology>
    </subcellularLocation>
</comment>
<comment type="similarity">
    <text evidence="1">Belongs to the MscL family.</text>
</comment>
<comment type="sequence caution" evidence="2">
    <conflict type="erroneous initiation">
        <sequence resource="EMBL-CDS" id="AAW62130"/>
    </conflict>
</comment>
<name>MSCL_GLUOX</name>
<dbReference type="EMBL" id="CP000009">
    <property type="protein sequence ID" value="AAW62130.1"/>
    <property type="status" value="ALT_INIT"/>
    <property type="molecule type" value="Genomic_DNA"/>
</dbReference>
<dbReference type="RefSeq" id="WP_024717071.1">
    <property type="nucleotide sequence ID" value="NZ_LT900338.1"/>
</dbReference>
<dbReference type="SMR" id="Q5FNB7"/>
<dbReference type="STRING" id="290633.GOX2399"/>
<dbReference type="GeneID" id="56906724"/>
<dbReference type="KEGG" id="gox:GOX2399"/>
<dbReference type="eggNOG" id="COG1970">
    <property type="taxonomic scope" value="Bacteria"/>
</dbReference>
<dbReference type="HOGENOM" id="CLU_095787_0_1_5"/>
<dbReference type="Proteomes" id="UP000006375">
    <property type="component" value="Chromosome"/>
</dbReference>
<dbReference type="GO" id="GO:0005886">
    <property type="term" value="C:plasma membrane"/>
    <property type="evidence" value="ECO:0007669"/>
    <property type="project" value="UniProtKB-SubCell"/>
</dbReference>
<dbReference type="GO" id="GO:0008381">
    <property type="term" value="F:mechanosensitive monoatomic ion channel activity"/>
    <property type="evidence" value="ECO:0007669"/>
    <property type="project" value="UniProtKB-UniRule"/>
</dbReference>
<dbReference type="Gene3D" id="1.10.1200.120">
    <property type="entry name" value="Large-conductance mechanosensitive channel, MscL, domain 1"/>
    <property type="match status" value="1"/>
</dbReference>
<dbReference type="HAMAP" id="MF_00115">
    <property type="entry name" value="MscL"/>
    <property type="match status" value="1"/>
</dbReference>
<dbReference type="InterPro" id="IPR019823">
    <property type="entry name" value="Mechanosensitive_channel_CS"/>
</dbReference>
<dbReference type="InterPro" id="IPR001185">
    <property type="entry name" value="MS_channel"/>
</dbReference>
<dbReference type="InterPro" id="IPR037673">
    <property type="entry name" value="MSC/AndL"/>
</dbReference>
<dbReference type="InterPro" id="IPR036019">
    <property type="entry name" value="MscL_channel"/>
</dbReference>
<dbReference type="NCBIfam" id="TIGR00220">
    <property type="entry name" value="mscL"/>
    <property type="match status" value="1"/>
</dbReference>
<dbReference type="NCBIfam" id="NF001843">
    <property type="entry name" value="PRK00567.1-4"/>
    <property type="match status" value="1"/>
</dbReference>
<dbReference type="NCBIfam" id="NF010557">
    <property type="entry name" value="PRK13952.1"/>
    <property type="match status" value="1"/>
</dbReference>
<dbReference type="PANTHER" id="PTHR30266:SF2">
    <property type="entry name" value="LARGE-CONDUCTANCE MECHANOSENSITIVE CHANNEL"/>
    <property type="match status" value="1"/>
</dbReference>
<dbReference type="PANTHER" id="PTHR30266">
    <property type="entry name" value="MECHANOSENSITIVE CHANNEL MSCL"/>
    <property type="match status" value="1"/>
</dbReference>
<dbReference type="Pfam" id="PF01741">
    <property type="entry name" value="MscL"/>
    <property type="match status" value="1"/>
</dbReference>
<dbReference type="PRINTS" id="PR01264">
    <property type="entry name" value="MECHCHANNEL"/>
</dbReference>
<dbReference type="SUPFAM" id="SSF81330">
    <property type="entry name" value="Gated mechanosensitive channel"/>
    <property type="match status" value="1"/>
</dbReference>
<dbReference type="PROSITE" id="PS01327">
    <property type="entry name" value="MSCL"/>
    <property type="match status" value="1"/>
</dbReference>
<gene>
    <name evidence="1" type="primary">mscL</name>
    <name type="ordered locus">GOX2399</name>
</gene>
<reference key="1">
    <citation type="journal article" date="2005" name="Nat. Biotechnol.">
        <title>Complete genome sequence of the acetic acid bacterium Gluconobacter oxydans.</title>
        <authorList>
            <person name="Prust C."/>
            <person name="Hoffmeister M."/>
            <person name="Liesegang H."/>
            <person name="Wiezer A."/>
            <person name="Fricke W.F."/>
            <person name="Ehrenreich A."/>
            <person name="Gottschalk G."/>
            <person name="Deppenmeier U."/>
        </authorList>
    </citation>
    <scope>NUCLEOTIDE SEQUENCE [LARGE SCALE GENOMIC DNA]</scope>
    <source>
        <strain>621H</strain>
    </source>
</reference>